<comment type="function">
    <text evidence="1">Catalyzes the N-acylation of UDP-3-O-acylglucosamine using 3-hydroxyacyl-ACP as the acyl donor. Is involved in the biosynthesis of lipid A, a phosphorylated glycolipid that anchors the lipopolysaccharide to the outer membrane of the cell.</text>
</comment>
<comment type="catalytic activity">
    <reaction evidence="1">
        <text>a UDP-3-O-[(3R)-3-hydroxyacyl]-alpha-D-glucosamine + a (3R)-hydroxyacyl-[ACP] = a UDP-2-N,3-O-bis[(3R)-3-hydroxyacyl]-alpha-D-glucosamine + holo-[ACP] + H(+)</text>
        <dbReference type="Rhea" id="RHEA:53836"/>
        <dbReference type="Rhea" id="RHEA-COMP:9685"/>
        <dbReference type="Rhea" id="RHEA-COMP:9945"/>
        <dbReference type="ChEBI" id="CHEBI:15378"/>
        <dbReference type="ChEBI" id="CHEBI:64479"/>
        <dbReference type="ChEBI" id="CHEBI:78827"/>
        <dbReference type="ChEBI" id="CHEBI:137740"/>
        <dbReference type="ChEBI" id="CHEBI:137748"/>
        <dbReference type="EC" id="2.3.1.191"/>
    </reaction>
</comment>
<comment type="pathway">
    <text evidence="1">Bacterial outer membrane biogenesis; LPS lipid A biosynthesis.</text>
</comment>
<comment type="subunit">
    <text evidence="1">Homotrimer.</text>
</comment>
<comment type="similarity">
    <text evidence="1">Belongs to the transferase hexapeptide repeat family. LpxD subfamily.</text>
</comment>
<proteinExistence type="inferred from homology"/>
<protein>
    <recommendedName>
        <fullName evidence="1">UDP-3-O-acylglucosamine N-acyltransferase</fullName>
        <ecNumber evidence="1">2.3.1.191</ecNumber>
    </recommendedName>
</protein>
<feature type="chain" id="PRO_1000050962" description="UDP-3-O-acylglucosamine N-acyltransferase">
    <location>
        <begin position="1"/>
        <end position="354"/>
    </location>
</feature>
<feature type="active site" description="Proton acceptor" evidence="1">
    <location>
        <position position="258"/>
    </location>
</feature>
<keyword id="KW-0012">Acyltransferase</keyword>
<keyword id="KW-0441">Lipid A biosynthesis</keyword>
<keyword id="KW-0444">Lipid biosynthesis</keyword>
<keyword id="KW-0443">Lipid metabolism</keyword>
<keyword id="KW-0677">Repeat</keyword>
<keyword id="KW-0808">Transferase</keyword>
<reference key="1">
    <citation type="submission" date="2007-06" db="EMBL/GenBank/DDBJ databases">
        <title>Complete sequence of Sinorhizobium medicae WSM419 chromosome.</title>
        <authorList>
            <consortium name="US DOE Joint Genome Institute"/>
            <person name="Copeland A."/>
            <person name="Lucas S."/>
            <person name="Lapidus A."/>
            <person name="Barry K."/>
            <person name="Glavina del Rio T."/>
            <person name="Dalin E."/>
            <person name="Tice H."/>
            <person name="Pitluck S."/>
            <person name="Chain P."/>
            <person name="Malfatti S."/>
            <person name="Shin M."/>
            <person name="Vergez L."/>
            <person name="Schmutz J."/>
            <person name="Larimer F."/>
            <person name="Land M."/>
            <person name="Hauser L."/>
            <person name="Kyrpides N."/>
            <person name="Mikhailova N."/>
            <person name="Reeve W.G."/>
            <person name="Richardson P."/>
        </authorList>
    </citation>
    <scope>NUCLEOTIDE SEQUENCE [LARGE SCALE GENOMIC DNA]</scope>
    <source>
        <strain>WSM419</strain>
    </source>
</reference>
<accession>A6U8L0</accession>
<name>LPXD_SINMW</name>
<organism>
    <name type="scientific">Sinorhizobium medicae (strain WSM419)</name>
    <name type="common">Ensifer medicae</name>
    <dbReference type="NCBI Taxonomy" id="366394"/>
    <lineage>
        <taxon>Bacteria</taxon>
        <taxon>Pseudomonadati</taxon>
        <taxon>Pseudomonadota</taxon>
        <taxon>Alphaproteobacteria</taxon>
        <taxon>Hyphomicrobiales</taxon>
        <taxon>Rhizobiaceae</taxon>
        <taxon>Sinorhizobium/Ensifer group</taxon>
        <taxon>Sinorhizobium</taxon>
    </lineage>
</organism>
<gene>
    <name evidence="1" type="primary">lpxD</name>
    <name type="ordered locus">Smed_1139</name>
</gene>
<evidence type="ECO:0000255" key="1">
    <source>
        <dbReference type="HAMAP-Rule" id="MF_00523"/>
    </source>
</evidence>
<dbReference type="EC" id="2.3.1.191" evidence="1"/>
<dbReference type="EMBL" id="CP000738">
    <property type="protein sequence ID" value="ABR59990.1"/>
    <property type="molecule type" value="Genomic_DNA"/>
</dbReference>
<dbReference type="RefSeq" id="WP_011975309.1">
    <property type="nucleotide sequence ID" value="NC_009636.1"/>
</dbReference>
<dbReference type="RefSeq" id="YP_001326825.1">
    <property type="nucleotide sequence ID" value="NC_009636.1"/>
</dbReference>
<dbReference type="SMR" id="A6U8L0"/>
<dbReference type="STRING" id="366394.Smed_1139"/>
<dbReference type="KEGG" id="smd:Smed_1139"/>
<dbReference type="PATRIC" id="fig|366394.8.peg.4264"/>
<dbReference type="eggNOG" id="COG1044">
    <property type="taxonomic scope" value="Bacteria"/>
</dbReference>
<dbReference type="HOGENOM" id="CLU_049865_0_2_5"/>
<dbReference type="OrthoDB" id="9784739at2"/>
<dbReference type="UniPathway" id="UPA00973"/>
<dbReference type="Proteomes" id="UP000001108">
    <property type="component" value="Chromosome"/>
</dbReference>
<dbReference type="GO" id="GO:0016020">
    <property type="term" value="C:membrane"/>
    <property type="evidence" value="ECO:0007669"/>
    <property type="project" value="GOC"/>
</dbReference>
<dbReference type="GO" id="GO:0016410">
    <property type="term" value="F:N-acyltransferase activity"/>
    <property type="evidence" value="ECO:0007669"/>
    <property type="project" value="InterPro"/>
</dbReference>
<dbReference type="GO" id="GO:0009245">
    <property type="term" value="P:lipid A biosynthetic process"/>
    <property type="evidence" value="ECO:0007669"/>
    <property type="project" value="UniProtKB-UniRule"/>
</dbReference>
<dbReference type="CDD" id="cd03352">
    <property type="entry name" value="LbH_LpxD"/>
    <property type="match status" value="1"/>
</dbReference>
<dbReference type="Gene3D" id="2.160.10.10">
    <property type="entry name" value="Hexapeptide repeat proteins"/>
    <property type="match status" value="1"/>
</dbReference>
<dbReference type="Gene3D" id="3.40.1390.10">
    <property type="entry name" value="MurE/MurF, N-terminal domain"/>
    <property type="match status" value="1"/>
</dbReference>
<dbReference type="HAMAP" id="MF_00523">
    <property type="entry name" value="LpxD"/>
    <property type="match status" value="1"/>
</dbReference>
<dbReference type="InterPro" id="IPR001451">
    <property type="entry name" value="Hexapep"/>
</dbReference>
<dbReference type="InterPro" id="IPR007691">
    <property type="entry name" value="LpxD"/>
</dbReference>
<dbReference type="InterPro" id="IPR011004">
    <property type="entry name" value="Trimer_LpxA-like_sf"/>
</dbReference>
<dbReference type="InterPro" id="IPR020573">
    <property type="entry name" value="UDP_GlcNAc_AcTrfase_non-rep"/>
</dbReference>
<dbReference type="NCBIfam" id="TIGR01853">
    <property type="entry name" value="lipid_A_lpxD"/>
    <property type="match status" value="1"/>
</dbReference>
<dbReference type="NCBIfam" id="NF002060">
    <property type="entry name" value="PRK00892.1"/>
    <property type="match status" value="1"/>
</dbReference>
<dbReference type="PANTHER" id="PTHR43378">
    <property type="entry name" value="UDP-3-O-ACYLGLUCOSAMINE N-ACYLTRANSFERASE"/>
    <property type="match status" value="1"/>
</dbReference>
<dbReference type="PANTHER" id="PTHR43378:SF2">
    <property type="entry name" value="UDP-3-O-ACYLGLUCOSAMINE N-ACYLTRANSFERASE 1, MITOCHONDRIAL-RELATED"/>
    <property type="match status" value="1"/>
</dbReference>
<dbReference type="Pfam" id="PF00132">
    <property type="entry name" value="Hexapep"/>
    <property type="match status" value="2"/>
</dbReference>
<dbReference type="Pfam" id="PF04613">
    <property type="entry name" value="LpxD"/>
    <property type="match status" value="1"/>
</dbReference>
<dbReference type="SUPFAM" id="SSF51161">
    <property type="entry name" value="Trimeric LpxA-like enzymes"/>
    <property type="match status" value="1"/>
</dbReference>
<dbReference type="PROSITE" id="PS00101">
    <property type="entry name" value="HEXAPEP_TRANSFERASES"/>
    <property type="match status" value="1"/>
</dbReference>
<sequence length="354" mass="36666">MEKNWFFPPHDGIRLGDLADQIGAELLDATAADRAVRAVAPVYRAKAGDVCYMLSRKSREELQTCSATAIICDKAISSLVPDTIPVLLTAKPHTAFALAGTLLHERAMRPSYNTSERGVSPGAFVDSTARLEAGVEVEPMAVIGAGAEIGSGTRIAAGAMIGPGVRIGRDCTISAGVSILCALIGNNVIIHPGTRIGQDGFGYAPGPTGGMIKIVQVGRVIIQDHVEIGANTTIDRGTMDDTVIGEGTKIDNLVQIGHNVRIGRYCGIVSQVGIAGSAQIGDGVMIGGGVGVNGHTSIGSGAQIAAMSGVASDVPAGERYGGIPARPMRDFLRDVAEMALRSSERQKKKGGKDE</sequence>